<protein>
    <recommendedName>
        <fullName>Antileukoproteinase</fullName>
        <shortName>ALP</shortName>
    </recommendedName>
    <alternativeName>
        <fullName>BLPI</fullName>
    </alternativeName>
    <alternativeName>
        <fullName evidence="15 16">HUSI-1</fullName>
    </alternativeName>
    <alternativeName>
        <fullName>Mucus proteinase inhibitor</fullName>
        <shortName>MPI</shortName>
    </alternativeName>
    <alternativeName>
        <fullName>Protease inhibitor WAP4</fullName>
    </alternativeName>
    <alternativeName>
        <fullName evidence="14">Secretory leukocyte protease inhibitor</fullName>
    </alternativeName>
    <alternativeName>
        <fullName>Seminal proteinase inhibitor</fullName>
    </alternativeName>
    <alternativeName>
        <fullName>WAP four-disulfide core domain protein 4</fullName>
    </alternativeName>
</protein>
<comment type="function">
    <text evidence="1 3 5 6 7 8 11 13 17">Acid-stable proteinase inhibitor with strong affinities for trypsin, chymotrypsin, elastase, and cathepsin G (PubMed:10702419, PubMed:2039600, PubMed:2110563, PubMed:24121345, PubMed:3462719, PubMed:3533531). Modulates the inflammatory and immune responses after bacterial infection, and after infection by the intracellular parasite L.major. Down-regulates responses to bacterial lipopolysaccharide (LPS) (By similarity). Plays a role in regulating the activation of NF-kappa-B and inflammatory responses (PubMed:10702419, PubMed:24352879). Has antimicrobial activity against mycobacteria, but not against salmonella. Contributes to normal resistance against infection by M.tuberculosis. Required for normal resistance to infection by L.major. Required for normal wound healing, probably by preventing tissue damage by limiting protease activity (By similarity). Together with ELANE, required for normal differentiation and proliferation of bone marrow myeloid cells (PubMed:24352879).</text>
</comment>
<comment type="subunit">
    <text evidence="4">Interacts with GRN; interaction protects progranulin from proteolysis.</text>
</comment>
<comment type="interaction">
    <interactant intactId="EBI-355293">
        <id>P03973</id>
    </interactant>
    <interactant intactId="EBI-12187137">
        <id>Q9BXU9</id>
        <label>CALN1</label>
    </interactant>
    <organismsDiffer>false</organismsDiffer>
    <experiments>3</experiments>
</comment>
<comment type="interaction">
    <interactant intactId="EBI-355293">
        <id>P03973</id>
    </interactant>
    <interactant intactId="EBI-10292696">
        <id>Q96Q77</id>
        <label>CIB3</label>
    </interactant>
    <organismsDiffer>false</organismsDiffer>
    <experiments>3</experiments>
</comment>
<comment type="interaction">
    <interactant intactId="EBI-355293">
        <id>P03973</id>
    </interactant>
    <interactant intactId="EBI-536772">
        <id>Q12805</id>
        <label>EFEMP1</label>
    </interactant>
    <organismsDiffer>false</organismsDiffer>
    <experiments>3</experiments>
</comment>
<comment type="interaction">
    <interactant intactId="EBI-355293">
        <id>P03973</id>
    </interactant>
    <interactant intactId="EBI-10175124">
        <id>Q8IZU0</id>
        <label>FAM9B</label>
    </interactant>
    <organismsDiffer>false</organismsDiffer>
    <experiments>6</experiments>
</comment>
<comment type="interaction">
    <interactant intactId="EBI-355293">
        <id>P03973</id>
    </interactant>
    <interactant intactId="EBI-740785">
        <id>P49639</id>
        <label>HOXA1</label>
    </interactant>
    <organismsDiffer>false</organismsDiffer>
    <experiments>3</experiments>
</comment>
<comment type="interaction">
    <interactant intactId="EBI-355293">
        <id>P03973</id>
    </interactant>
    <interactant intactId="EBI-8070286">
        <id>O43561-2</id>
        <label>LAT</label>
    </interactant>
    <organismsDiffer>false</organismsDiffer>
    <experiments>3</experiments>
</comment>
<comment type="interaction">
    <interactant intactId="EBI-355293">
        <id>P03973</id>
    </interactant>
    <interactant intactId="EBI-2340269">
        <id>Q13064</id>
        <label>MKRN3</label>
    </interactant>
    <organismsDiffer>false</organismsDiffer>
    <experiments>3</experiments>
</comment>
<comment type="interaction">
    <interactant intactId="EBI-355293">
        <id>P03973</id>
    </interactant>
    <interactant intactId="EBI-12135485">
        <id>P41271-2</id>
        <label>NBL1</label>
    </interactant>
    <organismsDiffer>false</organismsDiffer>
    <experiments>3</experiments>
</comment>
<comment type="interaction">
    <interactant intactId="EBI-355293">
        <id>P03973</id>
    </interactant>
    <interactant intactId="EBI-741158">
        <id>Q96HA8</id>
        <label>NTAQ1</label>
    </interactant>
    <organismsDiffer>false</organismsDiffer>
    <experiments>3</experiments>
</comment>
<comment type="interaction">
    <interactant intactId="EBI-355293">
        <id>P03973</id>
    </interactant>
    <interactant intactId="EBI-10232538">
        <id>Q8WWB5</id>
        <label>PIH1D2</label>
    </interactant>
    <organismsDiffer>false</organismsDiffer>
    <experiments>3</experiments>
</comment>
<comment type="interaction">
    <interactant intactId="EBI-355293">
        <id>P03973</id>
    </interactant>
    <interactant intactId="EBI-347996">
        <id>O43765</id>
        <label>SGTA</label>
    </interactant>
    <organismsDiffer>false</organismsDiffer>
    <experiments>6</experiments>
</comment>
<comment type="interaction">
    <interactant intactId="EBI-355293">
        <id>P03973</id>
    </interactant>
    <interactant intactId="EBI-744081">
        <id>Q96EQ0</id>
        <label>SGTB</label>
    </interactant>
    <organismsDiffer>false</organismsDiffer>
    <experiments>3</experiments>
</comment>
<comment type="interaction">
    <interactant intactId="EBI-355293">
        <id>P03973</id>
    </interactant>
    <interactant intactId="EBI-373430">
        <id>Q96QK8</id>
        <label>SMIM14</label>
    </interactant>
    <organismsDiffer>false</organismsDiffer>
    <experiments>3</experiments>
</comment>
<comment type="interaction">
    <interactant intactId="EBI-355293">
        <id>P03973</id>
    </interactant>
    <interactant intactId="EBI-741480">
        <id>Q9UMX0</id>
        <label>UBQLN1</label>
    </interactant>
    <organismsDiffer>false</organismsDiffer>
    <experiments>5</experiments>
</comment>
<comment type="interaction">
    <interactant intactId="EBI-355293">
        <id>P03973</id>
    </interactant>
    <interactant intactId="EBI-947187">
        <id>Q9UHD9</id>
        <label>UBQLN2</label>
    </interactant>
    <organismsDiffer>false</organismsDiffer>
    <experiments>3</experiments>
</comment>
<comment type="subcellular location">
    <subcellularLocation>
        <location evidence="5 8 11 12">Secreted</location>
    </subcellularLocation>
</comment>
<comment type="tissue specificity">
    <text evidence="5 8 11 12 13">Detected in blood plasma (PubMed:24352879). Detected in bone marrow myeloid cells (PubMed:24352879). Detected in airway sputum (PubMed:2039600). Detected in parotid gland secretions (PubMed:3462719). Detected in seminal plasma (at protein level) (PubMed:3485543). Detected in uterus cervix (PubMed:3533531).</text>
</comment>
<comment type="induction">
    <text evidence="8">Down-regulated in response to low ELANE activity. Up-regulated by ELANE treatment in bone marrow cells.</text>
</comment>
<comment type="miscellaneous">
    <text evidence="17">The pathologies of several chronic and acute diseases of the respiratory tract involve an imbalance between the proteases of cells involved in inflammatory responses and the inhibitors of these proteases. The inflammation-mediated release of neutrophil elastase in the lungs of patients whose levels of active alpha-1-antiprotease are compromised by genetic background, cigarette smoking, air pollutants, or a combination of all three can result in severe lung damage and a decreased lifespan. The relatively small size of this protein, its lack of glycosylation and its stability make this protein a candidate for use as a therapeutic agent in diseases mediated by leukocyte elastase-antielastase imbalances.</text>
</comment>
<proteinExistence type="evidence at protein level"/>
<organism>
    <name type="scientific">Homo sapiens</name>
    <name type="common">Human</name>
    <dbReference type="NCBI Taxonomy" id="9606"/>
    <lineage>
        <taxon>Eukaryota</taxon>
        <taxon>Metazoa</taxon>
        <taxon>Chordata</taxon>
        <taxon>Craniata</taxon>
        <taxon>Vertebrata</taxon>
        <taxon>Euteleostomi</taxon>
        <taxon>Mammalia</taxon>
        <taxon>Eutheria</taxon>
        <taxon>Euarchontoglires</taxon>
        <taxon>Primates</taxon>
        <taxon>Haplorrhini</taxon>
        <taxon>Catarrhini</taxon>
        <taxon>Hominidae</taxon>
        <taxon>Homo</taxon>
    </lineage>
</organism>
<gene>
    <name type="primary">SLPI</name>
    <name type="synonym">WAP4</name>
    <name type="synonym">WFDC4</name>
</gene>
<sequence>MKSSGLFPFLVLLALGTLAPWAVEGSGKSFKAGVCPPKKSAQCLRYKKPECQSDWQCPGKKRCCPDTCGIKCLDPVDTPNPTRRKPGKCPVTYGQCLMLNPPNFCEMDGQCKRDLKCCMGMCGKSCVSPVKA</sequence>
<reference key="1">
    <citation type="journal article" date="1986" name="Eur. J. Biochem.">
        <title>Molecular cloning and expression of cDNA for human antileukoprotease from cervix uterus.</title>
        <authorList>
            <person name="Heinzel R."/>
            <person name="Appelhans H."/>
            <person name="Gassen G."/>
            <person name="Seemueller U."/>
            <person name="Machleidt W."/>
            <person name="Fritz H."/>
            <person name="Steffens G."/>
        </authorList>
    </citation>
    <scope>NUCLEOTIDE SEQUENCE [MRNA]</scope>
    <scope>FUNCTION</scope>
    <scope>TISSUE SPECIFICITY</scope>
    <source>
        <tissue>Cervix</tissue>
    </source>
</reference>
<reference key="2">
    <citation type="journal article" date="1986" name="Nucleic Acids Res.">
        <title>Isolation and sequence of a human gene encoding a potent inhibitor of leukocyte proteases.</title>
        <authorList>
            <person name="Stetler G."/>
            <person name="Brewer M.T."/>
            <person name="Thompson R.C."/>
        </authorList>
    </citation>
    <scope>NUCLEOTIDE SEQUENCE [GENOMIC DNA / MRNA]</scope>
    <source>
        <tissue>Parotid gland</tissue>
    </source>
</reference>
<reference key="3">
    <citation type="submission" date="1998-12" db="EMBL/GenBank/DDBJ databases">
        <title>Cloning and characterization of SLPI from human intestinal epithelium.</title>
        <authorList>
            <person name="Si-Tahar M."/>
            <person name="Merlin D."/>
            <person name="Sitaraman S."/>
            <person name="Madara J.L."/>
        </authorList>
    </citation>
    <scope>NUCLEOTIDE SEQUENCE [MRNA]</scope>
    <source>
        <tissue>Intestine</tissue>
    </source>
</reference>
<reference key="4">
    <citation type="journal article" date="2004" name="Nat. Genet.">
        <title>Complete sequencing and characterization of 21,243 full-length human cDNAs.</title>
        <authorList>
            <person name="Ota T."/>
            <person name="Suzuki Y."/>
            <person name="Nishikawa T."/>
            <person name="Otsuki T."/>
            <person name="Sugiyama T."/>
            <person name="Irie R."/>
            <person name="Wakamatsu A."/>
            <person name="Hayashi K."/>
            <person name="Sato H."/>
            <person name="Nagai K."/>
            <person name="Kimura K."/>
            <person name="Makita H."/>
            <person name="Sekine M."/>
            <person name="Obayashi M."/>
            <person name="Nishi T."/>
            <person name="Shibahara T."/>
            <person name="Tanaka T."/>
            <person name="Ishii S."/>
            <person name="Yamamoto J."/>
            <person name="Saito K."/>
            <person name="Kawai Y."/>
            <person name="Isono Y."/>
            <person name="Nakamura Y."/>
            <person name="Nagahari K."/>
            <person name="Murakami K."/>
            <person name="Yasuda T."/>
            <person name="Iwayanagi T."/>
            <person name="Wagatsuma M."/>
            <person name="Shiratori A."/>
            <person name="Sudo H."/>
            <person name="Hosoiri T."/>
            <person name="Kaku Y."/>
            <person name="Kodaira H."/>
            <person name="Kondo H."/>
            <person name="Sugawara M."/>
            <person name="Takahashi M."/>
            <person name="Kanda K."/>
            <person name="Yokoi T."/>
            <person name="Furuya T."/>
            <person name="Kikkawa E."/>
            <person name="Omura Y."/>
            <person name="Abe K."/>
            <person name="Kamihara K."/>
            <person name="Katsuta N."/>
            <person name="Sato K."/>
            <person name="Tanikawa M."/>
            <person name="Yamazaki M."/>
            <person name="Ninomiya K."/>
            <person name="Ishibashi T."/>
            <person name="Yamashita H."/>
            <person name="Murakawa K."/>
            <person name="Fujimori K."/>
            <person name="Tanai H."/>
            <person name="Kimata M."/>
            <person name="Watanabe M."/>
            <person name="Hiraoka S."/>
            <person name="Chiba Y."/>
            <person name="Ishida S."/>
            <person name="Ono Y."/>
            <person name="Takiguchi S."/>
            <person name="Watanabe S."/>
            <person name="Yosida M."/>
            <person name="Hotuta T."/>
            <person name="Kusano J."/>
            <person name="Kanehori K."/>
            <person name="Takahashi-Fujii A."/>
            <person name="Hara H."/>
            <person name="Tanase T.-O."/>
            <person name="Nomura Y."/>
            <person name="Togiya S."/>
            <person name="Komai F."/>
            <person name="Hara R."/>
            <person name="Takeuchi K."/>
            <person name="Arita M."/>
            <person name="Imose N."/>
            <person name="Musashino K."/>
            <person name="Yuuki H."/>
            <person name="Oshima A."/>
            <person name="Sasaki N."/>
            <person name="Aotsuka S."/>
            <person name="Yoshikawa Y."/>
            <person name="Matsunawa H."/>
            <person name="Ichihara T."/>
            <person name="Shiohata N."/>
            <person name="Sano S."/>
            <person name="Moriya S."/>
            <person name="Momiyama H."/>
            <person name="Satoh N."/>
            <person name="Takami S."/>
            <person name="Terashima Y."/>
            <person name="Suzuki O."/>
            <person name="Nakagawa S."/>
            <person name="Senoh A."/>
            <person name="Mizoguchi H."/>
            <person name="Goto Y."/>
            <person name="Shimizu F."/>
            <person name="Wakebe H."/>
            <person name="Hishigaki H."/>
            <person name="Watanabe T."/>
            <person name="Sugiyama A."/>
            <person name="Takemoto M."/>
            <person name="Kawakami B."/>
            <person name="Yamazaki M."/>
            <person name="Watanabe K."/>
            <person name="Kumagai A."/>
            <person name="Itakura S."/>
            <person name="Fukuzumi Y."/>
            <person name="Fujimori Y."/>
            <person name="Komiyama M."/>
            <person name="Tashiro H."/>
            <person name="Tanigami A."/>
            <person name="Fujiwara T."/>
            <person name="Ono T."/>
            <person name="Yamada K."/>
            <person name="Fujii Y."/>
            <person name="Ozaki K."/>
            <person name="Hirao M."/>
            <person name="Ohmori Y."/>
            <person name="Kawabata A."/>
            <person name="Hikiji T."/>
            <person name="Kobatake N."/>
            <person name="Inagaki H."/>
            <person name="Ikema Y."/>
            <person name="Okamoto S."/>
            <person name="Okitani R."/>
            <person name="Kawakami T."/>
            <person name="Noguchi S."/>
            <person name="Itoh T."/>
            <person name="Shigeta K."/>
            <person name="Senba T."/>
            <person name="Matsumura K."/>
            <person name="Nakajima Y."/>
            <person name="Mizuno T."/>
            <person name="Morinaga M."/>
            <person name="Sasaki M."/>
            <person name="Togashi T."/>
            <person name="Oyama M."/>
            <person name="Hata H."/>
            <person name="Watanabe M."/>
            <person name="Komatsu T."/>
            <person name="Mizushima-Sugano J."/>
            <person name="Satoh T."/>
            <person name="Shirai Y."/>
            <person name="Takahashi Y."/>
            <person name="Nakagawa K."/>
            <person name="Okumura K."/>
            <person name="Nagase T."/>
            <person name="Nomura N."/>
            <person name="Kikuchi H."/>
            <person name="Masuho Y."/>
            <person name="Yamashita R."/>
            <person name="Nakai K."/>
            <person name="Yada T."/>
            <person name="Nakamura Y."/>
            <person name="Ohara O."/>
            <person name="Isogai T."/>
            <person name="Sugano S."/>
        </authorList>
    </citation>
    <scope>NUCLEOTIDE SEQUENCE [LARGE SCALE MRNA]</scope>
    <source>
        <tissue>Tongue</tissue>
    </source>
</reference>
<reference key="5">
    <citation type="journal article" date="2001" name="Nature">
        <title>The DNA sequence and comparative analysis of human chromosome 20.</title>
        <authorList>
            <person name="Deloukas P."/>
            <person name="Matthews L.H."/>
            <person name="Ashurst J.L."/>
            <person name="Burton J."/>
            <person name="Gilbert J.G.R."/>
            <person name="Jones M."/>
            <person name="Stavrides G."/>
            <person name="Almeida J.P."/>
            <person name="Babbage A.K."/>
            <person name="Bagguley C.L."/>
            <person name="Bailey J."/>
            <person name="Barlow K.F."/>
            <person name="Bates K.N."/>
            <person name="Beard L.M."/>
            <person name="Beare D.M."/>
            <person name="Beasley O.P."/>
            <person name="Bird C.P."/>
            <person name="Blakey S.E."/>
            <person name="Bridgeman A.M."/>
            <person name="Brown A.J."/>
            <person name="Buck D."/>
            <person name="Burrill W.D."/>
            <person name="Butler A.P."/>
            <person name="Carder C."/>
            <person name="Carter N.P."/>
            <person name="Chapman J.C."/>
            <person name="Clamp M."/>
            <person name="Clark G."/>
            <person name="Clark L.N."/>
            <person name="Clark S.Y."/>
            <person name="Clee C.M."/>
            <person name="Clegg S."/>
            <person name="Cobley V.E."/>
            <person name="Collier R.E."/>
            <person name="Connor R.E."/>
            <person name="Corby N.R."/>
            <person name="Coulson A."/>
            <person name="Coville G.J."/>
            <person name="Deadman R."/>
            <person name="Dhami P.D."/>
            <person name="Dunn M."/>
            <person name="Ellington A.G."/>
            <person name="Frankland J.A."/>
            <person name="Fraser A."/>
            <person name="French L."/>
            <person name="Garner P."/>
            <person name="Grafham D.V."/>
            <person name="Griffiths C."/>
            <person name="Griffiths M.N.D."/>
            <person name="Gwilliam R."/>
            <person name="Hall R.E."/>
            <person name="Hammond S."/>
            <person name="Harley J.L."/>
            <person name="Heath P.D."/>
            <person name="Ho S."/>
            <person name="Holden J.L."/>
            <person name="Howden P.J."/>
            <person name="Huckle E."/>
            <person name="Hunt A.R."/>
            <person name="Hunt S.E."/>
            <person name="Jekosch K."/>
            <person name="Johnson C.M."/>
            <person name="Johnson D."/>
            <person name="Kay M.P."/>
            <person name="Kimberley A.M."/>
            <person name="King A."/>
            <person name="Knights A."/>
            <person name="Laird G.K."/>
            <person name="Lawlor S."/>
            <person name="Lehvaeslaiho M.H."/>
            <person name="Leversha M.A."/>
            <person name="Lloyd C."/>
            <person name="Lloyd D.M."/>
            <person name="Lovell J.D."/>
            <person name="Marsh V.L."/>
            <person name="Martin S.L."/>
            <person name="McConnachie L.J."/>
            <person name="McLay K."/>
            <person name="McMurray A.A."/>
            <person name="Milne S.A."/>
            <person name="Mistry D."/>
            <person name="Moore M.J.F."/>
            <person name="Mullikin J.C."/>
            <person name="Nickerson T."/>
            <person name="Oliver K."/>
            <person name="Parker A."/>
            <person name="Patel R."/>
            <person name="Pearce T.A.V."/>
            <person name="Peck A.I."/>
            <person name="Phillimore B.J.C.T."/>
            <person name="Prathalingam S.R."/>
            <person name="Plumb R.W."/>
            <person name="Ramsay H."/>
            <person name="Rice C.M."/>
            <person name="Ross M.T."/>
            <person name="Scott C.E."/>
            <person name="Sehra H.K."/>
            <person name="Shownkeen R."/>
            <person name="Sims S."/>
            <person name="Skuce C.D."/>
            <person name="Smith M.L."/>
            <person name="Soderlund C."/>
            <person name="Steward C.A."/>
            <person name="Sulston J.E."/>
            <person name="Swann R.M."/>
            <person name="Sycamore N."/>
            <person name="Taylor R."/>
            <person name="Tee L."/>
            <person name="Thomas D.W."/>
            <person name="Thorpe A."/>
            <person name="Tracey A."/>
            <person name="Tromans A.C."/>
            <person name="Vaudin M."/>
            <person name="Wall M."/>
            <person name="Wallis J.M."/>
            <person name="Whitehead S.L."/>
            <person name="Whittaker P."/>
            <person name="Willey D.L."/>
            <person name="Williams L."/>
            <person name="Williams S.A."/>
            <person name="Wilming L."/>
            <person name="Wray P.W."/>
            <person name="Hubbard T."/>
            <person name="Durbin R.M."/>
            <person name="Bentley D.R."/>
            <person name="Beck S."/>
            <person name="Rogers J."/>
        </authorList>
    </citation>
    <scope>NUCLEOTIDE SEQUENCE [LARGE SCALE GENOMIC DNA]</scope>
</reference>
<reference key="6">
    <citation type="submission" date="2005-09" db="EMBL/GenBank/DDBJ databases">
        <authorList>
            <person name="Mural R.J."/>
            <person name="Istrail S."/>
            <person name="Sutton G.G."/>
            <person name="Florea L."/>
            <person name="Halpern A.L."/>
            <person name="Mobarry C.M."/>
            <person name="Lippert R."/>
            <person name="Walenz B."/>
            <person name="Shatkay H."/>
            <person name="Dew I."/>
            <person name="Miller J.R."/>
            <person name="Flanigan M.J."/>
            <person name="Edwards N.J."/>
            <person name="Bolanos R."/>
            <person name="Fasulo D."/>
            <person name="Halldorsson B.V."/>
            <person name="Hannenhalli S."/>
            <person name="Turner R."/>
            <person name="Yooseph S."/>
            <person name="Lu F."/>
            <person name="Nusskern D.R."/>
            <person name="Shue B.C."/>
            <person name="Zheng X.H."/>
            <person name="Zhong F."/>
            <person name="Delcher A.L."/>
            <person name="Huson D.H."/>
            <person name="Kravitz S.A."/>
            <person name="Mouchard L."/>
            <person name="Reinert K."/>
            <person name="Remington K.A."/>
            <person name="Clark A.G."/>
            <person name="Waterman M.S."/>
            <person name="Eichler E.E."/>
            <person name="Adams M.D."/>
            <person name="Hunkapiller M.W."/>
            <person name="Myers E.W."/>
            <person name="Venter J.C."/>
        </authorList>
    </citation>
    <scope>NUCLEOTIDE SEQUENCE [LARGE SCALE GENOMIC DNA]</scope>
</reference>
<reference key="7">
    <citation type="journal article" date="2004" name="Genome Res.">
        <title>The status, quality, and expansion of the NIH full-length cDNA project: the Mammalian Gene Collection (MGC).</title>
        <authorList>
            <consortium name="The MGC Project Team"/>
        </authorList>
    </citation>
    <scope>NUCLEOTIDE SEQUENCE [LARGE SCALE MRNA]</scope>
    <source>
        <tissue>Liver</tissue>
    </source>
</reference>
<reference key="8">
    <citation type="journal article" date="1986" name="FEBS Lett.">
        <title>The acid-stable proteinase inhibitor of human mucous secretions (HUSI-I, antileukoprotease). Complete amino acid sequence as revealed by protein and cDNA sequencing and structural homology to whey proteins and Red sea turtle proteinase inhibitor.</title>
        <authorList>
            <person name="Seemueller U."/>
            <person name="Arnhold M."/>
            <person name="Fritz H."/>
            <person name="Wiedenmann K."/>
            <person name="Machleidt W."/>
            <person name="Heinzel R."/>
            <person name="Appelhans H."/>
            <person name="Gassen H.-G."/>
            <person name="Lottspeich F."/>
        </authorList>
    </citation>
    <scope>PROTEIN SEQUENCE OF 26-132</scope>
    <scope>NUCLEOTIDE SEQUENCE [MRNA] OF 26-65</scope>
    <scope>SUBCELLULAR LOCATION</scope>
    <scope>TISSUE SPECIFICITY</scope>
</reference>
<reference key="9">
    <citation type="journal article" date="1986" name="Proc. Natl. Acad. Sci. U.S.A.">
        <title>Isolation, properties, and complete amino acid sequence of human secretory leukocyte protease inhibitor, a potent inhibitor of leukocyte elastase.</title>
        <authorList>
            <person name="Thompson R.C."/>
            <person name="Ohlsson K."/>
        </authorList>
    </citation>
    <scope>PROTEIN SEQUENCE OF 26-132</scope>
    <scope>FUNCTION</scope>
    <scope>SUBCELLULAR LOCATION</scope>
    <scope>TISSUE SPECIFICITY</scope>
</reference>
<reference key="10">
    <citation type="journal article" date="1991" name="Biol. Chem. Hoppe-Seyler">
        <title>Purification and characterization of elastase-specific inhibitor. Sequence homology with mucus proteinase inhibitor.</title>
        <authorList>
            <person name="Sallenave J.-M."/>
            <person name="Ryle A.P."/>
        </authorList>
    </citation>
    <scope>PROTEIN SEQUENCE OF 26-52</scope>
    <scope>SUBCELLULAR LOCATION</scope>
    <scope>TISSUE SPECIFICITY</scope>
    <scope>FUNCTION</scope>
</reference>
<reference key="11">
    <citation type="journal article" date="2015" name="J. Proteome Res.">
        <title>Human basal tear peptidome characterization by CID, HCD, and ETD followed by in silico and in vitro analyses for antimicrobial peptide identification.</title>
        <authorList>
            <person name="Azkargorta M."/>
            <person name="Soria J."/>
            <person name="Ojeda C."/>
            <person name="Guzman F."/>
            <person name="Acera A."/>
            <person name="Iloro I."/>
            <person name="Suarez T."/>
            <person name="Elortza F."/>
        </authorList>
    </citation>
    <scope>PROTEIN SEQUENCE OF 26-46 AND 94-132</scope>
    <scope>IDENTIFICATION BY MASS SPECTROMETRY</scope>
    <source>
        <tissue>Tear</tissue>
    </source>
</reference>
<reference key="12">
    <citation type="journal article" date="1990" name="J. Biol. Chem.">
        <title>Location of the protease-inhibitory region of secretory leukocyte protease inhibitor.</title>
        <authorList>
            <person name="Eisenberg S.P."/>
            <person name="Hale K.K."/>
            <person name="Heimdal P."/>
            <person name="Thompson R.C."/>
        </authorList>
    </citation>
    <scope>FUNCTION</scope>
    <scope>MUTAGENESIS OF ARG-45; LEU-97; MET-98 AND LEU-99</scope>
</reference>
<reference key="13">
    <citation type="journal article" date="2000" name="Am. J. Pathol.">
        <title>Anti-inflammatory effects of mutant forms of secretory leukocyte protease inhibitor.</title>
        <authorList>
            <person name="Mulligan M.S."/>
            <person name="Lentsch A.B."/>
            <person name="Huber-Lang M."/>
            <person name="Guo R.F."/>
            <person name="Sarma V."/>
            <person name="Wright C.D."/>
            <person name="Ulich T.R."/>
            <person name="Ward P.A."/>
        </authorList>
    </citation>
    <scope>FUNCTION</scope>
    <scope>MUTAGENESIS OF ARG-45 AND LEU-97</scope>
</reference>
<reference key="14">
    <citation type="journal article" date="2002" name="Cell">
        <title>Conversion of proepithelin to epithelins: roles of SLPI and elastase in host defense and wound repair.</title>
        <authorList>
            <person name="Zhu J."/>
            <person name="Nathan C."/>
            <person name="Jin W."/>
            <person name="Sim D."/>
            <person name="Ashcroft G.S."/>
            <person name="Wahl S.M."/>
            <person name="Lacomis L."/>
            <person name="Erdjument-Bromage H."/>
            <person name="Tempst P."/>
            <person name="Wright C.D."/>
            <person name="Ding A."/>
        </authorList>
    </citation>
    <scope>INTERACTION WITH GRN</scope>
</reference>
<reference key="15">
    <citation type="journal article" date="2014" name="Blood">
        <title>A lack of secretory leukocyte protease inhibitor (SLPI) causes defects in granulocytic differentiation.</title>
        <authorList>
            <person name="Klimenkova O."/>
            <person name="Ellerbeck W."/>
            <person name="Klimiankou M."/>
            <person name="Unalan M."/>
            <person name="Kandabarau S."/>
            <person name="Gigina A."/>
            <person name="Hussein K."/>
            <person name="Zeidler C."/>
            <person name="Welte K."/>
            <person name="Skokowa J."/>
        </authorList>
    </citation>
    <scope>FUNCTION</scope>
    <scope>SUBCELLULAR LOCATION</scope>
    <scope>INDUCTION BY ELANE</scope>
    <scope>TISSUE SPECIFICITY</scope>
</reference>
<reference key="16">
    <citation type="journal article" date="1988" name="EMBO J.">
        <title>The 2.5 A X-ray crystal structure of the acid-stable proteinase inhibitor from human mucous secretions analysed in its complex with bovine alpha-chymotrypsin.</title>
        <authorList>
            <person name="Gruetter M.G."/>
            <person name="Fendrich G."/>
            <person name="Huber R."/>
            <person name="Bode W."/>
        </authorList>
    </citation>
    <scope>X-RAY CRYSTALLOGRAPHY (2.5 ANGSTROMS) IN COMPLEX WITH CHYMOTRYPSIN</scope>
    <scope>DISULFIDE BONDS</scope>
    <scope>REACTIVE BOND</scope>
</reference>
<reference key="17">
    <citation type="journal article" date="2008" name="J. Synchrotron Radiat.">
        <title>Complex of human neutrophil elastase with 1/2SLPI.</title>
        <authorList>
            <person name="Koizumi M."/>
            <person name="Fujino A."/>
            <person name="Fukushima K."/>
            <person name="Kamimura T."/>
            <person name="Takimoto-Kamimura M."/>
        </authorList>
    </citation>
    <scope>X-RAY CRYSTALLOGRAPHY (1.70 ANGSTROMS) OF 83-132 IN COMPLEX WITH ELANE</scope>
    <scope>REACTIVE BOND</scope>
    <scope>DISULFIDE BONDS</scope>
</reference>
<reference key="18">
    <citation type="journal article" date="2013" name="J. Synchrotron Radiat.">
        <title>Structure basis 1/2SLPI and porcine pancreas trypsin interaction.</title>
        <authorList>
            <person name="Fukushima K."/>
            <person name="Kamimura T."/>
            <person name="Takimoto-Kamimura M."/>
        </authorList>
    </citation>
    <scope>X-RAY CRYSTALLOGRAPHY (2.00 ANGSTROMS) OF 85-131 IN COMPLEX WITH TRYPSIN</scope>
    <scope>FUNCTION</scope>
    <scope>REACTIVE BOND</scope>
    <scope>DISULFIDE BONDS</scope>
</reference>
<evidence type="ECO:0000250" key="1">
    <source>
        <dbReference type="UniProtKB" id="P97430"/>
    </source>
</evidence>
<evidence type="ECO:0000255" key="2">
    <source>
        <dbReference type="PROSITE-ProRule" id="PRU00722"/>
    </source>
</evidence>
<evidence type="ECO:0000269" key="3">
    <source>
    </source>
</evidence>
<evidence type="ECO:0000269" key="4">
    <source>
    </source>
</evidence>
<evidence type="ECO:0000269" key="5">
    <source>
    </source>
</evidence>
<evidence type="ECO:0000269" key="6">
    <source>
    </source>
</evidence>
<evidence type="ECO:0000269" key="7">
    <source>
    </source>
</evidence>
<evidence type="ECO:0000269" key="8">
    <source>
    </source>
</evidence>
<evidence type="ECO:0000269" key="9">
    <source>
    </source>
</evidence>
<evidence type="ECO:0000269" key="10">
    <source>
    </source>
</evidence>
<evidence type="ECO:0000269" key="11">
    <source>
    </source>
</evidence>
<evidence type="ECO:0000269" key="12">
    <source>
    </source>
</evidence>
<evidence type="ECO:0000269" key="13">
    <source>
    </source>
</evidence>
<evidence type="ECO:0000303" key="14">
    <source>
    </source>
</evidence>
<evidence type="ECO:0000303" key="15">
    <source>
    </source>
</evidence>
<evidence type="ECO:0000303" key="16">
    <source>
    </source>
</evidence>
<evidence type="ECO:0000305" key="17"/>
<evidence type="ECO:0000305" key="18">
    <source>
    </source>
</evidence>
<evidence type="ECO:0000305" key="19">
    <source>
    </source>
</evidence>
<evidence type="ECO:0000305" key="20">
    <source>
    </source>
</evidence>
<evidence type="ECO:0007744" key="21">
    <source>
        <dbReference type="PDB" id="2Z7F"/>
    </source>
</evidence>
<evidence type="ECO:0007744" key="22">
    <source>
        <dbReference type="PDB" id="4DOQ"/>
    </source>
</evidence>
<evidence type="ECO:0007829" key="23">
    <source>
        <dbReference type="PDB" id="2Z7F"/>
    </source>
</evidence>
<dbReference type="EMBL" id="X04470">
    <property type="protein sequence ID" value="CAA28158.1"/>
    <property type="molecule type" value="mRNA"/>
</dbReference>
<dbReference type="EMBL" id="X04502">
    <property type="protein sequence ID" value="CAA28187.1"/>
    <property type="molecule type" value="Genomic_DNA"/>
</dbReference>
<dbReference type="EMBL" id="X04503">
    <property type="protein sequence ID" value="CAA28188.1"/>
    <property type="molecule type" value="mRNA"/>
</dbReference>
<dbReference type="EMBL" id="AF114471">
    <property type="protein sequence ID" value="AAD19661.1"/>
    <property type="molecule type" value="mRNA"/>
</dbReference>
<dbReference type="EMBL" id="AK312192">
    <property type="protein sequence ID" value="BAG35125.1"/>
    <property type="molecule type" value="mRNA"/>
</dbReference>
<dbReference type="EMBL" id="AL035660">
    <property type="status" value="NOT_ANNOTATED_CDS"/>
    <property type="molecule type" value="Genomic_DNA"/>
</dbReference>
<dbReference type="EMBL" id="CH471077">
    <property type="protein sequence ID" value="EAW75869.1"/>
    <property type="molecule type" value="Genomic_DNA"/>
</dbReference>
<dbReference type="EMBL" id="BC020708">
    <property type="protein sequence ID" value="AAH20708.1"/>
    <property type="molecule type" value="mRNA"/>
</dbReference>
<dbReference type="CCDS" id="CCDS13347.1"/>
<dbReference type="PIR" id="A25541">
    <property type="entry name" value="TIHUSP"/>
</dbReference>
<dbReference type="RefSeq" id="NP_003055.1">
    <property type="nucleotide sequence ID" value="NM_003064.4"/>
</dbReference>
<dbReference type="PDB" id="2Z7F">
    <property type="method" value="X-ray"/>
    <property type="resolution" value="1.70 A"/>
    <property type="chains" value="I=83-132"/>
</dbReference>
<dbReference type="PDB" id="4DOQ">
    <property type="method" value="X-ray"/>
    <property type="resolution" value="2.00 A"/>
    <property type="chains" value="B/D=85-131"/>
</dbReference>
<dbReference type="PDBsum" id="2Z7F"/>
<dbReference type="PDBsum" id="4DOQ"/>
<dbReference type="SMR" id="P03973"/>
<dbReference type="BioGRID" id="112475">
    <property type="interactions" value="30"/>
</dbReference>
<dbReference type="CORUM" id="P03973"/>
<dbReference type="FunCoup" id="P03973">
    <property type="interactions" value="174"/>
</dbReference>
<dbReference type="IntAct" id="P03973">
    <property type="interactions" value="21"/>
</dbReference>
<dbReference type="MINT" id="P03973"/>
<dbReference type="STRING" id="9606.ENSP00000342082"/>
<dbReference type="MEROPS" id="I17.001"/>
<dbReference type="MEROPS" id="I17.950"/>
<dbReference type="iPTMnet" id="P03973"/>
<dbReference type="PhosphoSitePlus" id="P03973"/>
<dbReference type="BioMuta" id="SLPI"/>
<dbReference type="DMDM" id="113636"/>
<dbReference type="jPOST" id="P03973"/>
<dbReference type="MassIVE" id="P03973"/>
<dbReference type="PaxDb" id="9606-ENSP00000342082"/>
<dbReference type="PeptideAtlas" id="P03973"/>
<dbReference type="ProteomicsDB" id="51625"/>
<dbReference type="Pumba" id="P03973"/>
<dbReference type="Antibodypedia" id="3705">
    <property type="antibodies" value="433 antibodies from 36 providers"/>
</dbReference>
<dbReference type="DNASU" id="6590"/>
<dbReference type="Ensembl" id="ENST00000338380.2">
    <property type="protein sequence ID" value="ENSP00000342082.2"/>
    <property type="gene ID" value="ENSG00000124107.5"/>
</dbReference>
<dbReference type="GeneID" id="6590"/>
<dbReference type="KEGG" id="hsa:6590"/>
<dbReference type="MANE-Select" id="ENST00000338380.2">
    <property type="protein sequence ID" value="ENSP00000342082.2"/>
    <property type="RefSeq nucleotide sequence ID" value="NM_003064.4"/>
    <property type="RefSeq protein sequence ID" value="NP_003055.1"/>
</dbReference>
<dbReference type="UCSC" id="uc002xnm.2">
    <property type="organism name" value="human"/>
</dbReference>
<dbReference type="AGR" id="HGNC:11092"/>
<dbReference type="CTD" id="6590"/>
<dbReference type="DisGeNET" id="6590"/>
<dbReference type="GeneCards" id="SLPI"/>
<dbReference type="HGNC" id="HGNC:11092">
    <property type="gene designation" value="SLPI"/>
</dbReference>
<dbReference type="HPA" id="ENSG00000124107">
    <property type="expression patterns" value="Group enriched (cervix, salivary gland)"/>
</dbReference>
<dbReference type="MalaCards" id="SLPI"/>
<dbReference type="MIM" id="107285">
    <property type="type" value="gene"/>
</dbReference>
<dbReference type="neXtProt" id="NX_P03973"/>
<dbReference type="OpenTargets" id="ENSG00000124107"/>
<dbReference type="PharmGKB" id="PA35944"/>
<dbReference type="VEuPathDB" id="HostDB:ENSG00000124107"/>
<dbReference type="eggNOG" id="ENOG502SWIR">
    <property type="taxonomic scope" value="Eukaryota"/>
</dbReference>
<dbReference type="GeneTree" id="ENSGT00730000111217"/>
<dbReference type="HOGENOM" id="CLU_105901_2_1_1"/>
<dbReference type="InParanoid" id="P03973"/>
<dbReference type="OMA" id="NLKCCKG"/>
<dbReference type="OrthoDB" id="4473401at2759"/>
<dbReference type="PAN-GO" id="P03973">
    <property type="GO annotations" value="4 GO annotations based on evolutionary models"/>
</dbReference>
<dbReference type="PhylomeDB" id="P03973"/>
<dbReference type="TreeFam" id="TF338375"/>
<dbReference type="PathwayCommons" id="P03973"/>
<dbReference type="Reactome" id="R-HSA-6798695">
    <property type="pathway name" value="Neutrophil degranulation"/>
</dbReference>
<dbReference type="SignaLink" id="P03973"/>
<dbReference type="BioGRID-ORCS" id="6590">
    <property type="hits" value="16 hits in 1147 CRISPR screens"/>
</dbReference>
<dbReference type="ChiTaRS" id="SLPI">
    <property type="organism name" value="human"/>
</dbReference>
<dbReference type="EvolutionaryTrace" id="P03973"/>
<dbReference type="GeneWiki" id="SLPI"/>
<dbReference type="GenomeRNAi" id="6590"/>
<dbReference type="Pharos" id="P03973">
    <property type="development level" value="Tbio"/>
</dbReference>
<dbReference type="PRO" id="PR:P03973"/>
<dbReference type="Proteomes" id="UP000005640">
    <property type="component" value="Chromosome 20"/>
</dbReference>
<dbReference type="RNAct" id="P03973">
    <property type="molecule type" value="protein"/>
</dbReference>
<dbReference type="Bgee" id="ENSG00000124107">
    <property type="expression patterns" value="Expressed in trachea and 191 other cell types or tissues"/>
</dbReference>
<dbReference type="GO" id="GO:0062023">
    <property type="term" value="C:collagen-containing extracellular matrix"/>
    <property type="evidence" value="ECO:0007005"/>
    <property type="project" value="BHF-UCL"/>
</dbReference>
<dbReference type="GO" id="GO:0070062">
    <property type="term" value="C:extracellular exosome"/>
    <property type="evidence" value="ECO:0007005"/>
    <property type="project" value="UniProtKB"/>
</dbReference>
<dbReference type="GO" id="GO:0005576">
    <property type="term" value="C:extracellular region"/>
    <property type="evidence" value="ECO:0000304"/>
    <property type="project" value="Reactome"/>
</dbReference>
<dbReference type="GO" id="GO:0005615">
    <property type="term" value="C:extracellular space"/>
    <property type="evidence" value="ECO:0000314"/>
    <property type="project" value="UniProtKB"/>
</dbReference>
<dbReference type="GO" id="GO:0005794">
    <property type="term" value="C:Golgi apparatus"/>
    <property type="evidence" value="ECO:0000314"/>
    <property type="project" value="HPA"/>
</dbReference>
<dbReference type="GO" id="GO:0035580">
    <property type="term" value="C:specific granule lumen"/>
    <property type="evidence" value="ECO:0000304"/>
    <property type="project" value="Reactome"/>
</dbReference>
<dbReference type="GO" id="GO:0003677">
    <property type="term" value="F:DNA binding"/>
    <property type="evidence" value="ECO:0000314"/>
    <property type="project" value="UniProtKB"/>
</dbReference>
<dbReference type="GO" id="GO:0004866">
    <property type="term" value="F:endopeptidase inhibitor activity"/>
    <property type="evidence" value="ECO:0000314"/>
    <property type="project" value="UniProtKB"/>
</dbReference>
<dbReference type="GO" id="GO:0019899">
    <property type="term" value="F:enzyme binding"/>
    <property type="evidence" value="ECO:0000353"/>
    <property type="project" value="UniProtKB"/>
</dbReference>
<dbReference type="GO" id="GO:0003729">
    <property type="term" value="F:mRNA binding"/>
    <property type="evidence" value="ECO:0000314"/>
    <property type="project" value="UniProtKB"/>
</dbReference>
<dbReference type="GO" id="GO:0004867">
    <property type="term" value="F:serine-type endopeptidase inhibitor activity"/>
    <property type="evidence" value="ECO:0000314"/>
    <property type="project" value="UniProtKB"/>
</dbReference>
<dbReference type="GO" id="GO:0019731">
    <property type="term" value="P:antibacterial humoral response"/>
    <property type="evidence" value="ECO:0000314"/>
    <property type="project" value="UniProtKB"/>
</dbReference>
<dbReference type="GO" id="GO:0051851">
    <property type="term" value="P:host-mediated perturbation of symbiont process"/>
    <property type="evidence" value="ECO:0000314"/>
    <property type="project" value="UniProtKB"/>
</dbReference>
<dbReference type="GO" id="GO:0006955">
    <property type="term" value="P:immune response"/>
    <property type="evidence" value="ECO:0000250"/>
    <property type="project" value="UniProtKB"/>
</dbReference>
<dbReference type="GO" id="GO:0045087">
    <property type="term" value="P:innate immune response"/>
    <property type="evidence" value="ECO:0000250"/>
    <property type="project" value="UniProtKB"/>
</dbReference>
<dbReference type="GO" id="GO:0032091">
    <property type="term" value="P:negative regulation of protein binding"/>
    <property type="evidence" value="ECO:0000314"/>
    <property type="project" value="UniProtKB"/>
</dbReference>
<dbReference type="GO" id="GO:0045071">
    <property type="term" value="P:negative regulation of viral genome replication"/>
    <property type="evidence" value="ECO:0000314"/>
    <property type="project" value="UniProtKB"/>
</dbReference>
<dbReference type="GO" id="GO:0032496">
    <property type="term" value="P:response to lipopolysaccharide"/>
    <property type="evidence" value="ECO:0000250"/>
    <property type="project" value="UniProtKB"/>
</dbReference>
<dbReference type="CDD" id="cd00199">
    <property type="entry name" value="WAP"/>
    <property type="match status" value="1"/>
</dbReference>
<dbReference type="FunFam" id="4.10.75.10:FF:000001">
    <property type="entry name" value="Anosmin 1"/>
    <property type="match status" value="2"/>
</dbReference>
<dbReference type="Gene3D" id="4.10.75.10">
    <property type="entry name" value="Elafin-like"/>
    <property type="match status" value="2"/>
</dbReference>
<dbReference type="InterPro" id="IPR036645">
    <property type="entry name" value="Elafin-like_sf"/>
</dbReference>
<dbReference type="InterPro" id="IPR008197">
    <property type="entry name" value="WAP_dom"/>
</dbReference>
<dbReference type="InterPro" id="IPR050514">
    <property type="entry name" value="WAP_four-disulfide_core"/>
</dbReference>
<dbReference type="PANTHER" id="PTHR19441:SF44">
    <property type="entry name" value="ANTILEUKOPROTEINASE"/>
    <property type="match status" value="1"/>
</dbReference>
<dbReference type="PANTHER" id="PTHR19441">
    <property type="entry name" value="WHEY ACDIC PROTEIN WAP"/>
    <property type="match status" value="1"/>
</dbReference>
<dbReference type="Pfam" id="PF00095">
    <property type="entry name" value="WAP"/>
    <property type="match status" value="2"/>
</dbReference>
<dbReference type="PRINTS" id="PR00003">
    <property type="entry name" value="4DISULPHCORE"/>
</dbReference>
<dbReference type="SMART" id="SM00217">
    <property type="entry name" value="WAP"/>
    <property type="match status" value="2"/>
</dbReference>
<dbReference type="SUPFAM" id="SSF57256">
    <property type="entry name" value="Elafin-like"/>
    <property type="match status" value="2"/>
</dbReference>
<dbReference type="PROSITE" id="PS51390">
    <property type="entry name" value="WAP"/>
    <property type="match status" value="2"/>
</dbReference>
<accession>P03973</accession>
<accession>B2R5H8</accession>
<accession>P07757</accession>
<name>SLPI_HUMAN</name>
<feature type="signal peptide" evidence="5 9 11 12">
    <location>
        <begin position="1"/>
        <end position="25"/>
    </location>
</feature>
<feature type="chain" id="PRO_0000041355" description="Antileukoproteinase">
    <location>
        <begin position="26"/>
        <end position="132"/>
    </location>
</feature>
<feature type="domain" description="WAP 1" evidence="2">
    <location>
        <begin position="28"/>
        <end position="76"/>
    </location>
</feature>
<feature type="domain" description="WAP 2" evidence="2">
    <location>
        <begin position="82"/>
        <end position="130"/>
    </location>
</feature>
<feature type="region of interest" description="Elastase inhibitory domain">
    <location>
        <begin position="84"/>
        <end position="132"/>
    </location>
</feature>
<feature type="site" description="Reactive bond for chymotrypsin, trypsin and elastase" evidence="18 19 20">
    <location>
        <begin position="97"/>
        <end position="98"/>
    </location>
</feature>
<feature type="disulfide bond" evidence="10">
    <location>
        <begin position="35"/>
        <end position="64"/>
    </location>
</feature>
<feature type="disulfide bond" evidence="10">
    <location>
        <begin position="43"/>
        <end position="68"/>
    </location>
</feature>
<feature type="disulfide bond" evidence="10">
    <location>
        <begin position="51"/>
        <end position="63"/>
    </location>
</feature>
<feature type="disulfide bond" evidence="10">
    <location>
        <begin position="57"/>
        <end position="72"/>
    </location>
</feature>
<feature type="disulfide bond" evidence="10 21 22">
    <location>
        <begin position="89"/>
        <end position="118"/>
    </location>
</feature>
<feature type="disulfide bond" evidence="10 21 22">
    <location>
        <begin position="96"/>
        <end position="122"/>
    </location>
</feature>
<feature type="disulfide bond" evidence="10 21 22">
    <location>
        <begin position="105"/>
        <end position="117"/>
    </location>
</feature>
<feature type="disulfide bond" evidence="10 21 22">
    <location>
        <begin position="111"/>
        <end position="126"/>
    </location>
</feature>
<feature type="mutagenesis site" description="No significant effect on inhibition of elastase, trypsin and chymotrypsin." evidence="3 6">
    <original>R</original>
    <variation>G</variation>
    <location>
        <position position="45"/>
    </location>
</feature>
<feature type="mutagenesis site" description="No significant effect on inhibition of elastase, trypsin and chymotrypsin." evidence="6">
    <original>R</original>
    <variation>M</variation>
    <variation>V</variation>
    <location>
        <position position="45"/>
    </location>
</feature>
<feature type="mutagenesis site" description="Increases inhibition of chymotrypsin." evidence="3 6">
    <original>L</original>
    <variation>F</variation>
    <location>
        <position position="97"/>
    </location>
</feature>
<feature type="mutagenesis site" description="Reduced inhibition of elastase. Strongly reduced inhibition of chymotrypsin and trypsin." evidence="3 6">
    <original>L</original>
    <variation>G</variation>
    <location>
        <position position="97"/>
    </location>
</feature>
<feature type="mutagenesis site" description="Strongly reduced inhibition of elastase. Abolishes inhibition of trypsin." evidence="3 6">
    <original>L</original>
    <variation>K</variation>
    <variation>R</variation>
    <location>
        <position position="97"/>
    </location>
</feature>
<feature type="mutagenesis site" description="No significant effect on inhibition of elastase, trypsin and chymotrypsin." evidence="6">
    <original>M</original>
    <variation>G</variation>
    <location>
        <position position="98"/>
    </location>
</feature>
<feature type="mutagenesis site" description="No significant effect on inhibition of elastase, trypsin and chymotrypsin." evidence="6">
    <original>L</original>
    <variation>G</variation>
    <location>
        <position position="99"/>
    </location>
</feature>
<feature type="strand" evidence="23">
    <location>
        <begin position="86"/>
        <end position="88"/>
    </location>
</feature>
<feature type="strand" evidence="23">
    <location>
        <begin position="95"/>
        <end position="97"/>
    </location>
</feature>
<feature type="helix" evidence="23">
    <location>
        <begin position="108"/>
        <end position="110"/>
    </location>
</feature>
<feature type="strand" evidence="23">
    <location>
        <begin position="116"/>
        <end position="120"/>
    </location>
</feature>
<feature type="strand" evidence="23">
    <location>
        <begin position="123"/>
        <end position="127"/>
    </location>
</feature>
<keyword id="KW-0002">3D-structure</keyword>
<keyword id="KW-0044">Antibiotic</keyword>
<keyword id="KW-0929">Antimicrobial</keyword>
<keyword id="KW-0903">Direct protein sequencing</keyword>
<keyword id="KW-1015">Disulfide bond</keyword>
<keyword id="KW-0391">Immunity</keyword>
<keyword id="KW-0399">Innate immunity</keyword>
<keyword id="KW-0646">Protease inhibitor</keyword>
<keyword id="KW-1267">Proteomics identification</keyword>
<keyword id="KW-1185">Reference proteome</keyword>
<keyword id="KW-0677">Repeat</keyword>
<keyword id="KW-0964">Secreted</keyword>
<keyword id="KW-0722">Serine protease inhibitor</keyword>
<keyword id="KW-0732">Signal</keyword>